<comment type="function">
    <text evidence="1">Cell wall formation. Catalyzes the addition of glutamate to the nucleotide precursor UDP-N-acetylmuramoyl-L-alanine (UMA).</text>
</comment>
<comment type="catalytic activity">
    <reaction evidence="1">
        <text>UDP-N-acetyl-alpha-D-muramoyl-L-alanine + D-glutamate + ATP = UDP-N-acetyl-alpha-D-muramoyl-L-alanyl-D-glutamate + ADP + phosphate + H(+)</text>
        <dbReference type="Rhea" id="RHEA:16429"/>
        <dbReference type="ChEBI" id="CHEBI:15378"/>
        <dbReference type="ChEBI" id="CHEBI:29986"/>
        <dbReference type="ChEBI" id="CHEBI:30616"/>
        <dbReference type="ChEBI" id="CHEBI:43474"/>
        <dbReference type="ChEBI" id="CHEBI:83898"/>
        <dbReference type="ChEBI" id="CHEBI:83900"/>
        <dbReference type="ChEBI" id="CHEBI:456216"/>
        <dbReference type="EC" id="6.3.2.9"/>
    </reaction>
</comment>
<comment type="pathway">
    <text evidence="1">Cell wall biogenesis; peptidoglycan biosynthesis.</text>
</comment>
<comment type="subcellular location">
    <subcellularLocation>
        <location evidence="1">Cytoplasm</location>
    </subcellularLocation>
</comment>
<comment type="similarity">
    <text evidence="1">Belongs to the MurCDEF family.</text>
</comment>
<organism>
    <name type="scientific">Clostridium botulinum (strain Okra / Type B1)</name>
    <dbReference type="NCBI Taxonomy" id="498213"/>
    <lineage>
        <taxon>Bacteria</taxon>
        <taxon>Bacillati</taxon>
        <taxon>Bacillota</taxon>
        <taxon>Clostridia</taxon>
        <taxon>Eubacteriales</taxon>
        <taxon>Clostridiaceae</taxon>
        <taxon>Clostridium</taxon>
    </lineage>
</organism>
<protein>
    <recommendedName>
        <fullName evidence="1">UDP-N-acetylmuramoylalanine--D-glutamate ligase</fullName>
        <ecNumber evidence="1">6.3.2.9</ecNumber>
    </recommendedName>
    <alternativeName>
        <fullName evidence="1">D-glutamic acid-adding enzyme</fullName>
    </alternativeName>
    <alternativeName>
        <fullName evidence="1">UDP-N-acetylmuramoyl-L-alanyl-D-glutamate synthetase</fullName>
    </alternativeName>
</protein>
<keyword id="KW-0067">ATP-binding</keyword>
<keyword id="KW-0131">Cell cycle</keyword>
<keyword id="KW-0132">Cell division</keyword>
<keyword id="KW-0133">Cell shape</keyword>
<keyword id="KW-0961">Cell wall biogenesis/degradation</keyword>
<keyword id="KW-0963">Cytoplasm</keyword>
<keyword id="KW-0436">Ligase</keyword>
<keyword id="KW-0547">Nucleotide-binding</keyword>
<keyword id="KW-0573">Peptidoglycan synthesis</keyword>
<feature type="chain" id="PRO_1000130845" description="UDP-N-acetylmuramoylalanine--D-glutamate ligase">
    <location>
        <begin position="1"/>
        <end position="458"/>
    </location>
</feature>
<feature type="binding site" evidence="1">
    <location>
        <begin position="124"/>
        <end position="130"/>
    </location>
    <ligand>
        <name>ATP</name>
        <dbReference type="ChEBI" id="CHEBI:30616"/>
    </ligand>
</feature>
<proteinExistence type="inferred from homology"/>
<name>MURD_CLOBK</name>
<reference key="1">
    <citation type="journal article" date="2007" name="PLoS ONE">
        <title>Analysis of the neurotoxin complex genes in Clostridium botulinum A1-A4 and B1 strains: BoNT/A3, /Ba4 and /B1 clusters are located within plasmids.</title>
        <authorList>
            <person name="Smith T.J."/>
            <person name="Hill K.K."/>
            <person name="Foley B.T."/>
            <person name="Detter J.C."/>
            <person name="Munk A.C."/>
            <person name="Bruce D.C."/>
            <person name="Doggett N.A."/>
            <person name="Smith L.A."/>
            <person name="Marks J.D."/>
            <person name="Xie G."/>
            <person name="Brettin T.S."/>
        </authorList>
    </citation>
    <scope>NUCLEOTIDE SEQUENCE [LARGE SCALE GENOMIC DNA]</scope>
    <source>
        <strain>Okra / Type B1</strain>
    </source>
</reference>
<gene>
    <name evidence="1" type="primary">murD</name>
    <name type="ordered locus">CLD_0974</name>
</gene>
<evidence type="ECO:0000255" key="1">
    <source>
        <dbReference type="HAMAP-Rule" id="MF_00639"/>
    </source>
</evidence>
<dbReference type="EC" id="6.3.2.9" evidence="1"/>
<dbReference type="EMBL" id="CP000939">
    <property type="protein sequence ID" value="ACA44295.1"/>
    <property type="molecule type" value="Genomic_DNA"/>
</dbReference>
<dbReference type="RefSeq" id="WP_015957612.1">
    <property type="nucleotide sequence ID" value="NC_010516.1"/>
</dbReference>
<dbReference type="SMR" id="B1IGJ0"/>
<dbReference type="KEGG" id="cbb:CLD_0974"/>
<dbReference type="HOGENOM" id="CLU_032540_0_1_9"/>
<dbReference type="UniPathway" id="UPA00219"/>
<dbReference type="Proteomes" id="UP000008541">
    <property type="component" value="Chromosome"/>
</dbReference>
<dbReference type="GO" id="GO:0005737">
    <property type="term" value="C:cytoplasm"/>
    <property type="evidence" value="ECO:0007669"/>
    <property type="project" value="UniProtKB-SubCell"/>
</dbReference>
<dbReference type="GO" id="GO:0005524">
    <property type="term" value="F:ATP binding"/>
    <property type="evidence" value="ECO:0007669"/>
    <property type="project" value="UniProtKB-UniRule"/>
</dbReference>
<dbReference type="GO" id="GO:0008764">
    <property type="term" value="F:UDP-N-acetylmuramoylalanine-D-glutamate ligase activity"/>
    <property type="evidence" value="ECO:0007669"/>
    <property type="project" value="UniProtKB-UniRule"/>
</dbReference>
<dbReference type="GO" id="GO:0051301">
    <property type="term" value="P:cell division"/>
    <property type="evidence" value="ECO:0007669"/>
    <property type="project" value="UniProtKB-KW"/>
</dbReference>
<dbReference type="GO" id="GO:0071555">
    <property type="term" value="P:cell wall organization"/>
    <property type="evidence" value="ECO:0007669"/>
    <property type="project" value="UniProtKB-KW"/>
</dbReference>
<dbReference type="GO" id="GO:0009252">
    <property type="term" value="P:peptidoglycan biosynthetic process"/>
    <property type="evidence" value="ECO:0007669"/>
    <property type="project" value="UniProtKB-UniRule"/>
</dbReference>
<dbReference type="GO" id="GO:0008360">
    <property type="term" value="P:regulation of cell shape"/>
    <property type="evidence" value="ECO:0007669"/>
    <property type="project" value="UniProtKB-KW"/>
</dbReference>
<dbReference type="Gene3D" id="3.90.190.20">
    <property type="entry name" value="Mur ligase, C-terminal domain"/>
    <property type="match status" value="1"/>
</dbReference>
<dbReference type="Gene3D" id="3.40.1190.10">
    <property type="entry name" value="Mur-like, catalytic domain"/>
    <property type="match status" value="1"/>
</dbReference>
<dbReference type="Gene3D" id="3.40.50.720">
    <property type="entry name" value="NAD(P)-binding Rossmann-like Domain"/>
    <property type="match status" value="1"/>
</dbReference>
<dbReference type="HAMAP" id="MF_00639">
    <property type="entry name" value="MurD"/>
    <property type="match status" value="1"/>
</dbReference>
<dbReference type="InterPro" id="IPR036565">
    <property type="entry name" value="Mur-like_cat_sf"/>
</dbReference>
<dbReference type="InterPro" id="IPR004101">
    <property type="entry name" value="Mur_ligase_C"/>
</dbReference>
<dbReference type="InterPro" id="IPR036615">
    <property type="entry name" value="Mur_ligase_C_dom_sf"/>
</dbReference>
<dbReference type="InterPro" id="IPR013221">
    <property type="entry name" value="Mur_ligase_cen"/>
</dbReference>
<dbReference type="InterPro" id="IPR005762">
    <property type="entry name" value="MurD"/>
</dbReference>
<dbReference type="NCBIfam" id="TIGR01087">
    <property type="entry name" value="murD"/>
    <property type="match status" value="1"/>
</dbReference>
<dbReference type="PANTHER" id="PTHR43692">
    <property type="entry name" value="UDP-N-ACETYLMURAMOYLALANINE--D-GLUTAMATE LIGASE"/>
    <property type="match status" value="1"/>
</dbReference>
<dbReference type="PANTHER" id="PTHR43692:SF1">
    <property type="entry name" value="UDP-N-ACETYLMURAMOYLALANINE--D-GLUTAMATE LIGASE"/>
    <property type="match status" value="1"/>
</dbReference>
<dbReference type="Pfam" id="PF02875">
    <property type="entry name" value="Mur_ligase_C"/>
    <property type="match status" value="1"/>
</dbReference>
<dbReference type="Pfam" id="PF08245">
    <property type="entry name" value="Mur_ligase_M"/>
    <property type="match status" value="1"/>
</dbReference>
<dbReference type="Pfam" id="PF21799">
    <property type="entry name" value="MurD-like_N"/>
    <property type="match status" value="1"/>
</dbReference>
<dbReference type="SUPFAM" id="SSF51984">
    <property type="entry name" value="MurCD N-terminal domain"/>
    <property type="match status" value="1"/>
</dbReference>
<dbReference type="SUPFAM" id="SSF53623">
    <property type="entry name" value="MurD-like peptide ligases, catalytic domain"/>
    <property type="match status" value="1"/>
</dbReference>
<dbReference type="SUPFAM" id="SSF53244">
    <property type="entry name" value="MurD-like peptide ligases, peptide-binding domain"/>
    <property type="match status" value="1"/>
</dbReference>
<accession>B1IGJ0</accession>
<sequence length="458" mass="51526">MKSNFSKFKDFIKYKKVAVVGIGVSNRPLIKFLVKLGAKVTAFDKKHREKLGSISFELEEIGVDLVLGENYLDKLDGYDVIFKTPSMRIDRPEFVKAKESGAYITSEMEEFIKYCPAKVFGITGSDGKTTTTTLVYEMLKREGYRTWVGGNIGTPLFANIEEMKEDHMVVLELSSFQLMTMDVSPEISLITNLSPNHLDVHKDFEEYVWAKKNIFKYQSSNNLLVLNKDDDLTNGMENEALGDVLKFSLVEKVYNGACLSNNKLTIQGKEVCDSKDINLKGRHNIANLLAAFCMVNKYVSIDSMKYVATNFSGVEHRCEFIREVNGVKYYNDSIASSPSRTLAGLNSFEKPVILIAGGYDKKIPFEPLAEGGYDKIKILILMGDTKNKIRSAFEKVISYKKCEMEIVIVNSMEEAVKVADDMAEKGDIITLSPACASFDMYPNFEIRGNEFKNIVNSL</sequence>